<gene>
    <name evidence="2" type="primary">petD</name>
</gene>
<proteinExistence type="inferred from homology"/>
<comment type="function">
    <text evidence="2">Component of the cytochrome b6-f complex, which mediates electron transfer between photosystem II (PSII) and photosystem I (PSI), cyclic electron flow around PSI, and state transitions.</text>
</comment>
<comment type="subunit">
    <text evidence="1">The 4 large subunits of the cytochrome b6-f complex are cytochrome b6, subunit IV (17 kDa polypeptide, petD), cytochrome f and the Rieske protein, while the 4 small subunits are petG, petL, petM and petN. The complex functions as a dimer (By similarity).</text>
</comment>
<comment type="subcellular location">
    <subcellularLocation>
        <location evidence="2">Plastid</location>
        <location evidence="2">Chloroplast thylakoid membrane</location>
        <topology evidence="2">Multi-pass membrane protein</topology>
    </subcellularLocation>
</comment>
<comment type="similarity">
    <text evidence="2">Belongs to the cytochrome b family. PetD subfamily.</text>
</comment>
<dbReference type="EMBL" id="DQ887677">
    <property type="protein sequence ID" value="ABI14502.1"/>
    <property type="molecule type" value="Genomic_DNA"/>
</dbReference>
<dbReference type="RefSeq" id="YP_784504.1">
    <property type="nucleotide sequence ID" value="NC_008457.1"/>
</dbReference>
<dbReference type="SMR" id="Q06GM9"/>
<dbReference type="GeneID" id="4363649"/>
<dbReference type="GO" id="GO:0009535">
    <property type="term" value="C:chloroplast thylakoid membrane"/>
    <property type="evidence" value="ECO:0007669"/>
    <property type="project" value="UniProtKB-SubCell"/>
</dbReference>
<dbReference type="GO" id="GO:0045158">
    <property type="term" value="F:electron transporter, transferring electrons within cytochrome b6/f complex of photosystem II activity"/>
    <property type="evidence" value="ECO:0007669"/>
    <property type="project" value="UniProtKB-UniRule"/>
</dbReference>
<dbReference type="GO" id="GO:0045156">
    <property type="term" value="F:electron transporter, transferring electrons within the cyclic electron transport pathway of photosynthesis activity"/>
    <property type="evidence" value="ECO:0007669"/>
    <property type="project" value="InterPro"/>
</dbReference>
<dbReference type="GO" id="GO:0016491">
    <property type="term" value="F:oxidoreductase activity"/>
    <property type="evidence" value="ECO:0007669"/>
    <property type="project" value="InterPro"/>
</dbReference>
<dbReference type="GO" id="GO:0009767">
    <property type="term" value="P:photosynthetic electron transport chain"/>
    <property type="evidence" value="ECO:0007669"/>
    <property type="project" value="InterPro"/>
</dbReference>
<dbReference type="CDD" id="cd00290">
    <property type="entry name" value="cytochrome_b_C"/>
    <property type="match status" value="1"/>
</dbReference>
<dbReference type="FunFam" id="1.10.287.980:FF:000001">
    <property type="entry name" value="Cytochrome b6-f complex subunit 4"/>
    <property type="match status" value="1"/>
</dbReference>
<dbReference type="FunFam" id="1.20.5.510:FF:000002">
    <property type="entry name" value="Cytochrome b6-f complex subunit 4"/>
    <property type="match status" value="1"/>
</dbReference>
<dbReference type="Gene3D" id="1.10.287.980">
    <property type="entry name" value="plastocyanin oxidoreductase"/>
    <property type="match status" value="1"/>
</dbReference>
<dbReference type="Gene3D" id="1.20.5.510">
    <property type="entry name" value="Single helix bin"/>
    <property type="match status" value="1"/>
</dbReference>
<dbReference type="HAMAP" id="MF_01344">
    <property type="entry name" value="Cytb6_f_subIV"/>
    <property type="match status" value="1"/>
</dbReference>
<dbReference type="InterPro" id="IPR005798">
    <property type="entry name" value="Cyt_b/b6_C"/>
</dbReference>
<dbReference type="InterPro" id="IPR036150">
    <property type="entry name" value="Cyt_b/b6_C_sf"/>
</dbReference>
<dbReference type="InterPro" id="IPR005870">
    <property type="entry name" value="Cyt_b6/f_cplx_suIV"/>
</dbReference>
<dbReference type="InterPro" id="IPR048260">
    <property type="entry name" value="Cytochrome_b_C_euk/bac"/>
</dbReference>
<dbReference type="NCBIfam" id="TIGR01156">
    <property type="entry name" value="cytb6_f_IV"/>
    <property type="match status" value="1"/>
</dbReference>
<dbReference type="PANTHER" id="PTHR19271">
    <property type="entry name" value="CYTOCHROME B"/>
    <property type="match status" value="1"/>
</dbReference>
<dbReference type="PANTHER" id="PTHR19271:SF40">
    <property type="entry name" value="CYTOCHROME B"/>
    <property type="match status" value="1"/>
</dbReference>
<dbReference type="Pfam" id="PF00032">
    <property type="entry name" value="Cytochrom_B_C"/>
    <property type="match status" value="1"/>
</dbReference>
<dbReference type="PIRSF" id="PIRSF000033">
    <property type="entry name" value="B6f_17K"/>
    <property type="match status" value="1"/>
</dbReference>
<dbReference type="SUPFAM" id="SSF81648">
    <property type="entry name" value="a domain/subunit of cytochrome bc1 complex (Ubiquinol-cytochrome c reductase)"/>
    <property type="match status" value="1"/>
</dbReference>
<dbReference type="PROSITE" id="PS51003">
    <property type="entry name" value="CYTB_CTER"/>
    <property type="match status" value="1"/>
</dbReference>
<reference key="1">
    <citation type="journal article" date="2006" name="BMC Evol. Biol.">
        <title>Complete plastid genome sequences of Drimys, Liriodendron, and Piper: implications for the phylogenetic relationships of magnoliids.</title>
        <authorList>
            <person name="Cai Z."/>
            <person name="Penaflor C."/>
            <person name="Kuehl J.V."/>
            <person name="Leebens-Mack J."/>
            <person name="Carlson J.E."/>
            <person name="dePamphilis C.W."/>
            <person name="Boore J.L."/>
            <person name="Jansen R.K."/>
        </authorList>
    </citation>
    <scope>NUCLEOTIDE SEQUENCE [LARGE SCALE GENOMIC DNA]</scope>
</reference>
<keyword id="KW-0150">Chloroplast</keyword>
<keyword id="KW-0249">Electron transport</keyword>
<keyword id="KW-0472">Membrane</keyword>
<keyword id="KW-0602">Photosynthesis</keyword>
<keyword id="KW-0934">Plastid</keyword>
<keyword id="KW-0793">Thylakoid</keyword>
<keyword id="KW-0812">Transmembrane</keyword>
<keyword id="KW-1133">Transmembrane helix</keyword>
<keyword id="KW-0813">Transport</keyword>
<geneLocation type="chloroplast"/>
<protein>
    <recommendedName>
        <fullName evidence="2">Cytochrome b6-f complex subunit 4</fullName>
    </recommendedName>
    <alternativeName>
        <fullName evidence="2">17 kDa polypeptide</fullName>
    </alternativeName>
</protein>
<feature type="chain" id="PRO_0000276543" description="Cytochrome b6-f complex subunit 4">
    <location>
        <begin position="1"/>
        <end position="159"/>
    </location>
</feature>
<feature type="transmembrane region" description="Helical" evidence="2">
    <location>
        <begin position="36"/>
        <end position="56"/>
    </location>
</feature>
<feature type="transmembrane region" description="Helical" evidence="2">
    <location>
        <begin position="95"/>
        <end position="115"/>
    </location>
</feature>
<feature type="transmembrane region" description="Helical" evidence="2">
    <location>
        <begin position="131"/>
        <end position="151"/>
    </location>
</feature>
<accession>Q06GM9</accession>
<sequence>MGITKKPDLNDPVLRAKLAKGMGHNYYGEPAWPNDLLYIFPVVILGTIACNVGLAVLEPSMIGEPADPFATPLEILPEWYFFPVFQILRTVPNKLLGVLLMVSVPAGLLTVPFLENVNKFQNPFRRPVATTVFLVGTVVALWLGIGATLPIDKSLTLGL</sequence>
<name>PETD_PIPCE</name>
<evidence type="ECO:0000250" key="1"/>
<evidence type="ECO:0000255" key="2">
    <source>
        <dbReference type="HAMAP-Rule" id="MF_01344"/>
    </source>
</evidence>
<organism>
    <name type="scientific">Piper cenocladum</name>
    <name type="common">Ant piper</name>
    <dbReference type="NCBI Taxonomy" id="398741"/>
    <lineage>
        <taxon>Eukaryota</taxon>
        <taxon>Viridiplantae</taxon>
        <taxon>Streptophyta</taxon>
        <taxon>Embryophyta</taxon>
        <taxon>Tracheophyta</taxon>
        <taxon>Spermatophyta</taxon>
        <taxon>Magnoliopsida</taxon>
        <taxon>Magnoliidae</taxon>
        <taxon>Piperales</taxon>
        <taxon>Piperaceae</taxon>
        <taxon>Piper</taxon>
    </lineage>
</organism>